<dbReference type="EC" id="2.3.2.27" evidence="3"/>
<dbReference type="EMBL" id="DQ086852">
    <property type="protein sequence ID" value="AAZ14056.1"/>
    <property type="molecule type" value="Genomic_DNA"/>
</dbReference>
<dbReference type="EMBL" id="AC006340">
    <property type="protein sequence ID" value="AAD15576.1"/>
    <property type="molecule type" value="Genomic_DNA"/>
</dbReference>
<dbReference type="EMBL" id="CP002685">
    <property type="protein sequence ID" value="AEC07340.1"/>
    <property type="molecule type" value="Genomic_DNA"/>
</dbReference>
<dbReference type="EMBL" id="AY091112">
    <property type="protein sequence ID" value="AAM14062.1"/>
    <property type="molecule type" value="mRNA"/>
</dbReference>
<dbReference type="EMBL" id="AY142578">
    <property type="protein sequence ID" value="AAN13147.1"/>
    <property type="molecule type" value="mRNA"/>
</dbReference>
<dbReference type="PIR" id="E84615">
    <property type="entry name" value="E84615"/>
</dbReference>
<dbReference type="RefSeq" id="NP_179853.1">
    <property type="nucleotide sequence ID" value="NM_127833.5"/>
</dbReference>
<dbReference type="SMR" id="Q9ZQ46"/>
<dbReference type="IntAct" id="Q9ZQ46">
    <property type="interactions" value="6"/>
</dbReference>
<dbReference type="STRING" id="3702.Q9ZQ46"/>
<dbReference type="iPTMnet" id="Q9ZQ46"/>
<dbReference type="PaxDb" id="3702-AT2G22680.1"/>
<dbReference type="ProteomicsDB" id="242746"/>
<dbReference type="EnsemblPlants" id="AT2G22680.1">
    <property type="protein sequence ID" value="AT2G22680.1"/>
    <property type="gene ID" value="AT2G22680"/>
</dbReference>
<dbReference type="GeneID" id="816799"/>
<dbReference type="Gramene" id="AT2G22680.1">
    <property type="protein sequence ID" value="AT2G22680.1"/>
    <property type="gene ID" value="AT2G22680"/>
</dbReference>
<dbReference type="KEGG" id="ath:AT2G22680"/>
<dbReference type="Araport" id="AT2G22680"/>
<dbReference type="TAIR" id="AT2G22680">
    <property type="gene designation" value="WAVH1"/>
</dbReference>
<dbReference type="eggNOG" id="ENOG502QVJZ">
    <property type="taxonomic scope" value="Eukaryota"/>
</dbReference>
<dbReference type="HOGENOM" id="CLU_006228_3_0_1"/>
<dbReference type="InParanoid" id="Q9ZQ46"/>
<dbReference type="OMA" id="DDSNCVL"/>
<dbReference type="PhylomeDB" id="Q9ZQ46"/>
<dbReference type="PRO" id="PR:Q9ZQ46"/>
<dbReference type="Proteomes" id="UP000006548">
    <property type="component" value="Chromosome 2"/>
</dbReference>
<dbReference type="ExpressionAtlas" id="Q9ZQ46">
    <property type="expression patterns" value="baseline and differential"/>
</dbReference>
<dbReference type="GO" id="GO:0061630">
    <property type="term" value="F:ubiquitin protein ligase activity"/>
    <property type="evidence" value="ECO:0000314"/>
    <property type="project" value="UniProtKB"/>
</dbReference>
<dbReference type="GO" id="GO:0008270">
    <property type="term" value="F:zinc ion binding"/>
    <property type="evidence" value="ECO:0007669"/>
    <property type="project" value="UniProtKB-KW"/>
</dbReference>
<dbReference type="GO" id="GO:0009630">
    <property type="term" value="P:gravitropism"/>
    <property type="evidence" value="ECO:0000315"/>
    <property type="project" value="UniProtKB"/>
</dbReference>
<dbReference type="GO" id="GO:0016567">
    <property type="term" value="P:protein ubiquitination"/>
    <property type="evidence" value="ECO:0000314"/>
    <property type="project" value="UniProtKB"/>
</dbReference>
<dbReference type="GO" id="GO:0048364">
    <property type="term" value="P:root development"/>
    <property type="evidence" value="ECO:0000315"/>
    <property type="project" value="UniProtKB"/>
</dbReference>
<dbReference type="CDD" id="cd01466">
    <property type="entry name" value="vWA_C3HC4_type"/>
    <property type="match status" value="1"/>
</dbReference>
<dbReference type="Gene3D" id="3.40.50.410">
    <property type="entry name" value="von Willebrand factor, type A domain"/>
    <property type="match status" value="1"/>
</dbReference>
<dbReference type="Gene3D" id="3.30.40.10">
    <property type="entry name" value="Zinc/RING finger domain, C3HC4 (zinc finger)"/>
    <property type="match status" value="1"/>
</dbReference>
<dbReference type="InterPro" id="IPR051266">
    <property type="entry name" value="CLCR"/>
</dbReference>
<dbReference type="InterPro" id="IPR002035">
    <property type="entry name" value="VWF_A"/>
</dbReference>
<dbReference type="InterPro" id="IPR036465">
    <property type="entry name" value="vWFA_dom_sf"/>
</dbReference>
<dbReference type="InterPro" id="IPR001841">
    <property type="entry name" value="Znf_RING"/>
</dbReference>
<dbReference type="InterPro" id="IPR013083">
    <property type="entry name" value="Znf_RING/FYVE/PHD"/>
</dbReference>
<dbReference type="PANTHER" id="PTHR10579">
    <property type="entry name" value="CALCIUM-ACTIVATED CHLORIDE CHANNEL REGULATOR"/>
    <property type="match status" value="1"/>
</dbReference>
<dbReference type="PANTHER" id="PTHR10579:SF165">
    <property type="entry name" value="E3 UBIQUITIN-PROTEIN LIGASE WAVH1"/>
    <property type="match status" value="1"/>
</dbReference>
<dbReference type="Pfam" id="PF13519">
    <property type="entry name" value="VWA_2"/>
    <property type="match status" value="1"/>
</dbReference>
<dbReference type="Pfam" id="PF25243">
    <property type="entry name" value="WAV3_C"/>
    <property type="match status" value="1"/>
</dbReference>
<dbReference type="Pfam" id="PF17123">
    <property type="entry name" value="zf-RING_11"/>
    <property type="match status" value="1"/>
</dbReference>
<dbReference type="SMART" id="SM00184">
    <property type="entry name" value="RING"/>
    <property type="match status" value="1"/>
</dbReference>
<dbReference type="SMART" id="SM00327">
    <property type="entry name" value="VWA"/>
    <property type="match status" value="1"/>
</dbReference>
<dbReference type="SUPFAM" id="SSF57850">
    <property type="entry name" value="RING/U-box"/>
    <property type="match status" value="1"/>
</dbReference>
<dbReference type="SUPFAM" id="SSF53300">
    <property type="entry name" value="vWA-like"/>
    <property type="match status" value="1"/>
</dbReference>
<dbReference type="PROSITE" id="PS50234">
    <property type="entry name" value="VWFA"/>
    <property type="match status" value="1"/>
</dbReference>
<dbReference type="PROSITE" id="PS50089">
    <property type="entry name" value="ZF_RING_2"/>
    <property type="match status" value="1"/>
</dbReference>
<keyword id="KW-0479">Metal-binding</keyword>
<keyword id="KW-1185">Reference proteome</keyword>
<keyword id="KW-0808">Transferase</keyword>
<keyword id="KW-0833">Ubl conjugation pathway</keyword>
<keyword id="KW-0862">Zinc</keyword>
<keyword id="KW-0863">Zinc-finger</keyword>
<feature type="chain" id="PRO_0000443505" description="E3 ubiquitin-protein ligase WAVH1">
    <location>
        <begin position="1"/>
        <end position="683"/>
    </location>
</feature>
<feature type="domain" description="VWFA" evidence="2">
    <location>
        <begin position="302"/>
        <end position="438"/>
    </location>
</feature>
<feature type="zinc finger region" description="RING-type; atypical" evidence="1">
    <location>
        <begin position="130"/>
        <end position="176"/>
    </location>
</feature>
<name>WAVH1_ARATH</name>
<accession>Q9ZQ46</accession>
<organism>
    <name type="scientific">Arabidopsis thaliana</name>
    <name type="common">Mouse-ear cress</name>
    <dbReference type="NCBI Taxonomy" id="3702"/>
    <lineage>
        <taxon>Eukaryota</taxon>
        <taxon>Viridiplantae</taxon>
        <taxon>Streptophyta</taxon>
        <taxon>Embryophyta</taxon>
        <taxon>Tracheophyta</taxon>
        <taxon>Spermatophyta</taxon>
        <taxon>Magnoliopsida</taxon>
        <taxon>eudicotyledons</taxon>
        <taxon>Gunneridae</taxon>
        <taxon>Pentapetalae</taxon>
        <taxon>rosids</taxon>
        <taxon>malvids</taxon>
        <taxon>Brassicales</taxon>
        <taxon>Brassicaceae</taxon>
        <taxon>Camelineae</taxon>
        <taxon>Arabidopsis</taxon>
    </lineage>
</organism>
<proteinExistence type="evidence at protein level"/>
<evidence type="ECO:0000255" key="1">
    <source>
        <dbReference type="PROSITE-ProRule" id="PRU00175"/>
    </source>
</evidence>
<evidence type="ECO:0000255" key="2">
    <source>
        <dbReference type="PROSITE-ProRule" id="PRU00219"/>
    </source>
</evidence>
<evidence type="ECO:0000269" key="3">
    <source>
    </source>
</evidence>
<evidence type="ECO:0000269" key="4">
    <source>
    </source>
</evidence>
<evidence type="ECO:0000303" key="5">
    <source>
    </source>
</evidence>
<evidence type="ECO:0000305" key="6"/>
<evidence type="ECO:0000312" key="7">
    <source>
        <dbReference type="Araport" id="AT2G22680"/>
    </source>
</evidence>
<gene>
    <name evidence="5" type="primary">WAVH1</name>
    <name evidence="7" type="ordered locus">At2g22680</name>
</gene>
<sequence length="683" mass="74401">MLNGWRRAFCTSIPKETNQNDVDDDGLVGLRHKSTSRFGFFSTPSTPRSDSGTGTYSLRCRTSTATAVSTTSSLPGTPKLKCKTTTTGETTPRNRSLVSLLTPSSSSISPASFTLLKSKLRFKQSSSNKCGICLQSVKSGQGTAIFTAECSHTFHFPCVTSRAAANHNRLASCPVCGSSLLPEIRNYAKPESQIKPEIKNKSLRVYNDDEALISSPISPAGFHTILESDENEDCEEFTGFSVNTPSPLTAKLLTDRNVDVKLSPESAIVASGKGYETYSVVMKVKSPPFPTARGFARRVPVDLVAVLDVSGRNSGGKLEMLKQTMRIVLSNLREMDRLSIIAFSSSSKRLSPLRRMTANGRRSARRIVDIITVPGSVSGVGIDFSGEGMSVNDALKKAVKVLDDRRQKNPFTAVFVLTDRQAHQVAQLAHSRIPIHTIWLSHAIPEDAFARTINGYLSLSVQDLGLQLGIVSGLGQGEITSVYSLSGRPAWLGTGSIRLGDMYAEEERALLVEIKSPVNNSLTGSRSHKIMTVRSRYVDPTTQELRNPEDRALLIPTPLTVRSSSNPNISRLRNLHVSTRAVAESRRLIERNHYSGAHRLLTSARALLVQHGLSSSDACIRGLDAEIADLNSVKGRHVAASESLESLTPTSAWKAAERLAKVAMVRKHMNRVSDLHGFENARF</sequence>
<protein>
    <recommendedName>
        <fullName evidence="6">E3 ubiquitin-protein ligase WAVH1</fullName>
        <ecNumber evidence="3">2.3.2.27</ecNumber>
    </recommendedName>
    <alternativeName>
        <fullName evidence="5">Protein WAV3 homolog 1</fullName>
    </alternativeName>
    <alternativeName>
        <fullName evidence="6">RING-type E3 ubiquitin transferase WAVH1</fullName>
    </alternativeName>
</protein>
<comment type="function">
    <text evidence="4">E3 ubiquitin-protein ligase involved in the regulation of root growth. Acts as a positive regulator of root gravitropism. Possesses E3 protein ligase activity in vitro.</text>
</comment>
<comment type="catalytic activity">
    <reaction evidence="3">
        <text>S-ubiquitinyl-[E2 ubiquitin-conjugating enzyme]-L-cysteine + [acceptor protein]-L-lysine = [E2 ubiquitin-conjugating enzyme]-L-cysteine + N(6)-ubiquitinyl-[acceptor protein]-L-lysine.</text>
        <dbReference type="EC" id="2.3.2.27"/>
    </reaction>
</comment>
<comment type="tissue specificity">
    <text evidence="4">Expressed in root tips and leaf primordia.</text>
</comment>
<reference key="1">
    <citation type="journal article" date="2005" name="Plant Physiol.">
        <title>Functional analysis of the RING-type ubiquitin ligase family of Arabidopsis.</title>
        <authorList>
            <person name="Stone S.L."/>
            <person name="Hauksdottir H."/>
            <person name="Troy A."/>
            <person name="Herschleb J."/>
            <person name="Kraft E."/>
            <person name="Callis J."/>
        </authorList>
    </citation>
    <scope>NUCLEOTIDE SEQUENCE [GENOMIC DNA]</scope>
    <scope>FUNCTION</scope>
    <scope>CATALYTIC ACTIVITY</scope>
    <source>
        <strain>cv. Columbia</strain>
        <tissue>Leaf</tissue>
    </source>
</reference>
<reference key="2">
    <citation type="journal article" date="1999" name="Nature">
        <title>Sequence and analysis of chromosome 2 of the plant Arabidopsis thaliana.</title>
        <authorList>
            <person name="Lin X."/>
            <person name="Kaul S."/>
            <person name="Rounsley S.D."/>
            <person name="Shea T.P."/>
            <person name="Benito M.-I."/>
            <person name="Town C.D."/>
            <person name="Fujii C.Y."/>
            <person name="Mason T.M."/>
            <person name="Bowman C.L."/>
            <person name="Barnstead M.E."/>
            <person name="Feldblyum T.V."/>
            <person name="Buell C.R."/>
            <person name="Ketchum K.A."/>
            <person name="Lee J.J."/>
            <person name="Ronning C.M."/>
            <person name="Koo H.L."/>
            <person name="Moffat K.S."/>
            <person name="Cronin L.A."/>
            <person name="Shen M."/>
            <person name="Pai G."/>
            <person name="Van Aken S."/>
            <person name="Umayam L."/>
            <person name="Tallon L.J."/>
            <person name="Gill J.E."/>
            <person name="Adams M.D."/>
            <person name="Carrera A.J."/>
            <person name="Creasy T.H."/>
            <person name="Goodman H.M."/>
            <person name="Somerville C.R."/>
            <person name="Copenhaver G.P."/>
            <person name="Preuss D."/>
            <person name="Nierman W.C."/>
            <person name="White O."/>
            <person name="Eisen J.A."/>
            <person name="Salzberg S.L."/>
            <person name="Fraser C.M."/>
            <person name="Venter J.C."/>
        </authorList>
    </citation>
    <scope>NUCLEOTIDE SEQUENCE [LARGE SCALE GENOMIC DNA]</scope>
    <source>
        <strain>cv. Columbia</strain>
    </source>
</reference>
<reference key="3">
    <citation type="journal article" date="2017" name="Plant J.">
        <title>Araport11: a complete reannotation of the Arabidopsis thaliana reference genome.</title>
        <authorList>
            <person name="Cheng C.Y."/>
            <person name="Krishnakumar V."/>
            <person name="Chan A.P."/>
            <person name="Thibaud-Nissen F."/>
            <person name="Schobel S."/>
            <person name="Town C.D."/>
        </authorList>
    </citation>
    <scope>GENOME REANNOTATION</scope>
    <source>
        <strain>cv. Columbia</strain>
    </source>
</reference>
<reference key="4">
    <citation type="journal article" date="2003" name="Science">
        <title>Empirical analysis of transcriptional activity in the Arabidopsis genome.</title>
        <authorList>
            <person name="Yamada K."/>
            <person name="Lim J."/>
            <person name="Dale J.M."/>
            <person name="Chen H."/>
            <person name="Shinn P."/>
            <person name="Palm C.J."/>
            <person name="Southwick A.M."/>
            <person name="Wu H.C."/>
            <person name="Kim C.J."/>
            <person name="Nguyen M."/>
            <person name="Pham P.K."/>
            <person name="Cheuk R.F."/>
            <person name="Karlin-Newmann G."/>
            <person name="Liu S.X."/>
            <person name="Lam B."/>
            <person name="Sakano H."/>
            <person name="Wu T."/>
            <person name="Yu G."/>
            <person name="Miranda M."/>
            <person name="Quach H.L."/>
            <person name="Tripp M."/>
            <person name="Chang C.H."/>
            <person name="Lee J.M."/>
            <person name="Toriumi M.J."/>
            <person name="Chan M.M."/>
            <person name="Tang C.C."/>
            <person name="Onodera C.S."/>
            <person name="Deng J.M."/>
            <person name="Akiyama K."/>
            <person name="Ansari Y."/>
            <person name="Arakawa T."/>
            <person name="Banh J."/>
            <person name="Banno F."/>
            <person name="Bowser L."/>
            <person name="Brooks S.Y."/>
            <person name="Carninci P."/>
            <person name="Chao Q."/>
            <person name="Choy N."/>
            <person name="Enju A."/>
            <person name="Goldsmith A.D."/>
            <person name="Gurjal M."/>
            <person name="Hansen N.F."/>
            <person name="Hayashizaki Y."/>
            <person name="Johnson-Hopson C."/>
            <person name="Hsuan V.W."/>
            <person name="Iida K."/>
            <person name="Karnes M."/>
            <person name="Khan S."/>
            <person name="Koesema E."/>
            <person name="Ishida J."/>
            <person name="Jiang P.X."/>
            <person name="Jones T."/>
            <person name="Kawai J."/>
            <person name="Kamiya A."/>
            <person name="Meyers C."/>
            <person name="Nakajima M."/>
            <person name="Narusaka M."/>
            <person name="Seki M."/>
            <person name="Sakurai T."/>
            <person name="Satou M."/>
            <person name="Tamse R."/>
            <person name="Vaysberg M."/>
            <person name="Wallender E.K."/>
            <person name="Wong C."/>
            <person name="Yamamura Y."/>
            <person name="Yuan S."/>
            <person name="Shinozaki K."/>
            <person name="Davis R.W."/>
            <person name="Theologis A."/>
            <person name="Ecker J.R."/>
        </authorList>
    </citation>
    <scope>NUCLEOTIDE SEQUENCE [LARGE SCALE MRNA]</scope>
    <source>
        <strain>cv. Columbia</strain>
    </source>
</reference>
<reference key="5">
    <citation type="journal article" date="2012" name="Plant J.">
        <title>The wavy growth 3 E3 ligase family controls the gravitropic response in Arabidopsis roots.</title>
        <authorList>
            <person name="Sakai T."/>
            <person name="Mochizuki S."/>
            <person name="Haga K."/>
            <person name="Uehara Y."/>
            <person name="Suzuki A."/>
            <person name="Harada A."/>
            <person name="Wada T."/>
            <person name="Ishiguro S."/>
            <person name="Okada K."/>
        </authorList>
    </citation>
    <scope>FUNCTION</scope>
    <scope>TISSUE SPECIFICITY</scope>
    <source>
        <strain>cv. Landsberg erecta</strain>
    </source>
</reference>